<accession>Q8KAJ3</accession>
<dbReference type="EMBL" id="AE006470">
    <property type="protein sequence ID" value="AAM73383.1"/>
    <property type="molecule type" value="Genomic_DNA"/>
</dbReference>
<dbReference type="RefSeq" id="NP_663041.1">
    <property type="nucleotide sequence ID" value="NC_002932.3"/>
</dbReference>
<dbReference type="RefSeq" id="WP_010933820.1">
    <property type="nucleotide sequence ID" value="NC_002932.3"/>
</dbReference>
<dbReference type="SMR" id="Q8KAJ3"/>
<dbReference type="STRING" id="194439.CT2167"/>
<dbReference type="EnsemblBacteria" id="AAM73383">
    <property type="protein sequence ID" value="AAM73383"/>
    <property type="gene ID" value="CT2167"/>
</dbReference>
<dbReference type="KEGG" id="cte:CT2167"/>
<dbReference type="PATRIC" id="fig|194439.7.peg.1966"/>
<dbReference type="eggNOG" id="COG0361">
    <property type="taxonomic scope" value="Bacteria"/>
</dbReference>
<dbReference type="HOGENOM" id="CLU_151267_1_0_10"/>
<dbReference type="OrthoDB" id="9803250at2"/>
<dbReference type="Proteomes" id="UP000001007">
    <property type="component" value="Chromosome"/>
</dbReference>
<dbReference type="GO" id="GO:0005829">
    <property type="term" value="C:cytosol"/>
    <property type="evidence" value="ECO:0007669"/>
    <property type="project" value="TreeGrafter"/>
</dbReference>
<dbReference type="GO" id="GO:0043022">
    <property type="term" value="F:ribosome binding"/>
    <property type="evidence" value="ECO:0007669"/>
    <property type="project" value="UniProtKB-UniRule"/>
</dbReference>
<dbReference type="GO" id="GO:0019843">
    <property type="term" value="F:rRNA binding"/>
    <property type="evidence" value="ECO:0007669"/>
    <property type="project" value="UniProtKB-UniRule"/>
</dbReference>
<dbReference type="GO" id="GO:0003743">
    <property type="term" value="F:translation initiation factor activity"/>
    <property type="evidence" value="ECO:0007669"/>
    <property type="project" value="UniProtKB-UniRule"/>
</dbReference>
<dbReference type="CDD" id="cd04451">
    <property type="entry name" value="S1_IF1"/>
    <property type="match status" value="1"/>
</dbReference>
<dbReference type="FunFam" id="2.40.50.140:FF:000002">
    <property type="entry name" value="Translation initiation factor IF-1"/>
    <property type="match status" value="1"/>
</dbReference>
<dbReference type="Gene3D" id="2.40.50.140">
    <property type="entry name" value="Nucleic acid-binding proteins"/>
    <property type="match status" value="1"/>
</dbReference>
<dbReference type="HAMAP" id="MF_00075">
    <property type="entry name" value="IF_1"/>
    <property type="match status" value="1"/>
</dbReference>
<dbReference type="InterPro" id="IPR012340">
    <property type="entry name" value="NA-bd_OB-fold"/>
</dbReference>
<dbReference type="InterPro" id="IPR006196">
    <property type="entry name" value="RNA-binding_domain_S1_IF1"/>
</dbReference>
<dbReference type="InterPro" id="IPR003029">
    <property type="entry name" value="S1_domain"/>
</dbReference>
<dbReference type="InterPro" id="IPR004368">
    <property type="entry name" value="TIF_IF1"/>
</dbReference>
<dbReference type="NCBIfam" id="TIGR00008">
    <property type="entry name" value="infA"/>
    <property type="match status" value="1"/>
</dbReference>
<dbReference type="PANTHER" id="PTHR33370">
    <property type="entry name" value="TRANSLATION INITIATION FACTOR IF-1, CHLOROPLASTIC"/>
    <property type="match status" value="1"/>
</dbReference>
<dbReference type="PANTHER" id="PTHR33370:SF1">
    <property type="entry name" value="TRANSLATION INITIATION FACTOR IF-1, CHLOROPLASTIC"/>
    <property type="match status" value="1"/>
</dbReference>
<dbReference type="Pfam" id="PF01176">
    <property type="entry name" value="eIF-1a"/>
    <property type="match status" value="1"/>
</dbReference>
<dbReference type="SMART" id="SM00316">
    <property type="entry name" value="S1"/>
    <property type="match status" value="1"/>
</dbReference>
<dbReference type="SUPFAM" id="SSF50249">
    <property type="entry name" value="Nucleic acid-binding proteins"/>
    <property type="match status" value="1"/>
</dbReference>
<dbReference type="PROSITE" id="PS50832">
    <property type="entry name" value="S1_IF1_TYPE"/>
    <property type="match status" value="1"/>
</dbReference>
<reference key="1">
    <citation type="journal article" date="2002" name="Proc. Natl. Acad. Sci. U.S.A.">
        <title>The complete genome sequence of Chlorobium tepidum TLS, a photosynthetic, anaerobic, green-sulfur bacterium.</title>
        <authorList>
            <person name="Eisen J.A."/>
            <person name="Nelson K.E."/>
            <person name="Paulsen I.T."/>
            <person name="Heidelberg J.F."/>
            <person name="Wu M."/>
            <person name="Dodson R.J."/>
            <person name="DeBoy R.T."/>
            <person name="Gwinn M.L."/>
            <person name="Nelson W.C."/>
            <person name="Haft D.H."/>
            <person name="Hickey E.K."/>
            <person name="Peterson J.D."/>
            <person name="Durkin A.S."/>
            <person name="Kolonay J.F."/>
            <person name="Yang F."/>
            <person name="Holt I.E."/>
            <person name="Umayam L.A."/>
            <person name="Mason T.M."/>
            <person name="Brenner M."/>
            <person name="Shea T.P."/>
            <person name="Parksey D.S."/>
            <person name="Nierman W.C."/>
            <person name="Feldblyum T.V."/>
            <person name="Hansen C.L."/>
            <person name="Craven M.B."/>
            <person name="Radune D."/>
            <person name="Vamathevan J.J."/>
            <person name="Khouri H.M."/>
            <person name="White O."/>
            <person name="Gruber T.M."/>
            <person name="Ketchum K.A."/>
            <person name="Venter J.C."/>
            <person name="Tettelin H."/>
            <person name="Bryant D.A."/>
            <person name="Fraser C.M."/>
        </authorList>
    </citation>
    <scope>NUCLEOTIDE SEQUENCE [LARGE SCALE GENOMIC DNA]</scope>
    <source>
        <strain>ATCC 49652 / DSM 12025 / NBRC 103806 / TLS</strain>
    </source>
</reference>
<sequence>MAKEESIEVEGEILEALPNAQFRVKLENGLEVLAHVSGKIRMHYIRILPGDKVKVQISPYDLSKGRITYRYK</sequence>
<gene>
    <name evidence="1" type="primary">infA</name>
    <name type="ordered locus">CT2167</name>
</gene>
<organism>
    <name type="scientific">Chlorobaculum tepidum (strain ATCC 49652 / DSM 12025 / NBRC 103806 / TLS)</name>
    <name type="common">Chlorobium tepidum</name>
    <dbReference type="NCBI Taxonomy" id="194439"/>
    <lineage>
        <taxon>Bacteria</taxon>
        <taxon>Pseudomonadati</taxon>
        <taxon>Chlorobiota</taxon>
        <taxon>Chlorobiia</taxon>
        <taxon>Chlorobiales</taxon>
        <taxon>Chlorobiaceae</taxon>
        <taxon>Chlorobaculum</taxon>
    </lineage>
</organism>
<proteinExistence type="inferred from homology"/>
<feature type="chain" id="PRO_0000095770" description="Translation initiation factor IF-1">
    <location>
        <begin position="1"/>
        <end position="72"/>
    </location>
</feature>
<feature type="domain" description="S1-like" evidence="1">
    <location>
        <begin position="1"/>
        <end position="72"/>
    </location>
</feature>
<protein>
    <recommendedName>
        <fullName evidence="1">Translation initiation factor IF-1</fullName>
    </recommendedName>
</protein>
<evidence type="ECO:0000255" key="1">
    <source>
        <dbReference type="HAMAP-Rule" id="MF_00075"/>
    </source>
</evidence>
<name>IF1_CHLTE</name>
<comment type="function">
    <text evidence="1">One of the essential components for the initiation of protein synthesis. Stabilizes the binding of IF-2 and IF-3 on the 30S subunit to which N-formylmethionyl-tRNA(fMet) subsequently binds. Helps modulate mRNA selection, yielding the 30S pre-initiation complex (PIC). Upon addition of the 50S ribosomal subunit IF-1, IF-2 and IF-3 are released leaving the mature 70S translation initiation complex.</text>
</comment>
<comment type="subunit">
    <text evidence="1">Component of the 30S ribosomal translation pre-initiation complex which assembles on the 30S ribosome in the order IF-2 and IF-3, IF-1 and N-formylmethionyl-tRNA(fMet); mRNA recruitment can occur at any time during PIC assembly.</text>
</comment>
<comment type="subcellular location">
    <subcellularLocation>
        <location evidence="1">Cytoplasm</location>
    </subcellularLocation>
</comment>
<comment type="similarity">
    <text evidence="1">Belongs to the IF-1 family.</text>
</comment>
<keyword id="KW-0963">Cytoplasm</keyword>
<keyword id="KW-0396">Initiation factor</keyword>
<keyword id="KW-0648">Protein biosynthesis</keyword>
<keyword id="KW-1185">Reference proteome</keyword>
<keyword id="KW-0694">RNA-binding</keyword>
<keyword id="KW-0699">rRNA-binding</keyword>